<reference key="1">
    <citation type="journal article" date="1998" name="Science">
        <title>Genome sequence of the nematode C. elegans: a platform for investigating biology.</title>
        <authorList>
            <consortium name="The C. elegans sequencing consortium"/>
        </authorList>
    </citation>
    <scope>NUCLEOTIDE SEQUENCE [LARGE SCALE GENOMIC DNA]</scope>
    <source>
        <strain>Bristol N2</strain>
    </source>
</reference>
<name>SRG8_CAEEL</name>
<proteinExistence type="inferred from homology"/>
<dbReference type="EMBL" id="FO080619">
    <property type="protein sequence ID" value="CCD65215.1"/>
    <property type="molecule type" value="Genomic_DNA"/>
</dbReference>
<dbReference type="PIR" id="T34353">
    <property type="entry name" value="T34353"/>
</dbReference>
<dbReference type="RefSeq" id="NP_498364.1">
    <property type="nucleotide sequence ID" value="NM_065963.1"/>
</dbReference>
<dbReference type="SMR" id="P46565"/>
<dbReference type="STRING" id="6239.T12A2.9.1"/>
<dbReference type="PaxDb" id="6239-T12A2.9"/>
<dbReference type="EnsemblMetazoa" id="T12A2.9.1">
    <property type="protein sequence ID" value="T12A2.9.1"/>
    <property type="gene ID" value="WBGene00005166"/>
</dbReference>
<dbReference type="GeneID" id="191834"/>
<dbReference type="KEGG" id="cel:CELE_T12A2.9"/>
<dbReference type="UCSC" id="T12A2.9">
    <property type="organism name" value="c. elegans"/>
</dbReference>
<dbReference type="AGR" id="WB:WBGene00005166"/>
<dbReference type="CTD" id="191834"/>
<dbReference type="WormBase" id="T12A2.9">
    <property type="protein sequence ID" value="CE01402"/>
    <property type="gene ID" value="WBGene00005166"/>
    <property type="gene designation" value="srg-8"/>
</dbReference>
<dbReference type="eggNOG" id="ENOG502TGX7">
    <property type="taxonomic scope" value="Eukaryota"/>
</dbReference>
<dbReference type="GeneTree" id="ENSGT00970000195841"/>
<dbReference type="HOGENOM" id="CLU_061253_1_0_1"/>
<dbReference type="InParanoid" id="P46565"/>
<dbReference type="OMA" id="PWASMSL"/>
<dbReference type="OrthoDB" id="5842884at2759"/>
<dbReference type="PhylomeDB" id="P46565"/>
<dbReference type="PRO" id="PR:P46565"/>
<dbReference type="Proteomes" id="UP000001940">
    <property type="component" value="Chromosome III"/>
</dbReference>
<dbReference type="GO" id="GO:0016020">
    <property type="term" value="C:membrane"/>
    <property type="evidence" value="ECO:0007669"/>
    <property type="project" value="UniProtKB-SubCell"/>
</dbReference>
<dbReference type="GO" id="GO:0004888">
    <property type="term" value="F:transmembrane signaling receptor activity"/>
    <property type="evidence" value="ECO:0007669"/>
    <property type="project" value="InterPro"/>
</dbReference>
<dbReference type="GO" id="GO:0007606">
    <property type="term" value="P:sensory perception of chemical stimulus"/>
    <property type="evidence" value="ECO:0007669"/>
    <property type="project" value="InterPro"/>
</dbReference>
<dbReference type="InterPro" id="IPR000609">
    <property type="entry name" value="7TM_GPCR_serpentine_rcpt_Srg"/>
</dbReference>
<dbReference type="InterPro" id="IPR051119">
    <property type="entry name" value="Nematode_SR-like"/>
</dbReference>
<dbReference type="PANTHER" id="PTHR31627:SF8">
    <property type="entry name" value="SERPENTINE RECEPTOR CLASS GAMMA-6-RELATED"/>
    <property type="match status" value="1"/>
</dbReference>
<dbReference type="PANTHER" id="PTHR31627">
    <property type="entry name" value="SERPENTINE RECEPTOR CLASS GAMMA-RELATED"/>
    <property type="match status" value="1"/>
</dbReference>
<dbReference type="Pfam" id="PF02118">
    <property type="entry name" value="Srg"/>
    <property type="match status" value="1"/>
</dbReference>
<dbReference type="PRINTS" id="PR00698">
    <property type="entry name" value="TMPROTEINSRG"/>
</dbReference>
<organism>
    <name type="scientific">Caenorhabditis elegans</name>
    <dbReference type="NCBI Taxonomy" id="6239"/>
    <lineage>
        <taxon>Eukaryota</taxon>
        <taxon>Metazoa</taxon>
        <taxon>Ecdysozoa</taxon>
        <taxon>Nematoda</taxon>
        <taxon>Chromadorea</taxon>
        <taxon>Rhabditida</taxon>
        <taxon>Rhabditina</taxon>
        <taxon>Rhabditomorpha</taxon>
        <taxon>Rhabditoidea</taxon>
        <taxon>Rhabditidae</taxon>
        <taxon>Peloderinae</taxon>
        <taxon>Caenorhabditis</taxon>
    </lineage>
</organism>
<comment type="subcellular location">
    <subcellularLocation>
        <location evidence="2">Membrane</location>
        <topology evidence="2">Multi-pass membrane protein</topology>
    </subcellularLocation>
</comment>
<comment type="similarity">
    <text evidence="2">Belongs to the nematode receptor-like protein srg family.</text>
</comment>
<accession>P46565</accession>
<sequence>MSGNSSTPNQGINCDPSYSYVMENFKYFVQVAYLAPAVFLYSRILYVVWVQHKKSYGYHPFFMVYSMVGLILVLLDIFITRLFVYVPQLCLPAAQFFISNPFLMELYYPLLNYLHCAQPFIQIFLTTNRMSSVLWPVDHEKFWKINFSRILILNLIAPFFFIWNTIISKKVLIFYFGGFYINYLKIIPWASMSLFLFIIRSAVVMITVVTTSITFWKMSHMKNRLKKSEGTLCKACAANSICFLVPAVFEAMKVLNTDWGKHWLAYLVQPFAWDVLNVGSPLVMIFASGQLRTHAFNIKRPVLKRSNSILVSSMTN</sequence>
<evidence type="ECO:0000255" key="1"/>
<evidence type="ECO:0000305" key="2"/>
<keyword id="KW-0472">Membrane</keyword>
<keyword id="KW-1185">Reference proteome</keyword>
<keyword id="KW-0812">Transmembrane</keyword>
<keyword id="KW-1133">Transmembrane helix</keyword>
<feature type="chain" id="PRO_0000104558" description="Serpentine receptor class gamma-8">
    <location>
        <begin position="1"/>
        <end position="316"/>
    </location>
</feature>
<feature type="transmembrane region" description="Helical" evidence="1">
    <location>
        <begin position="28"/>
        <end position="48"/>
    </location>
</feature>
<feature type="transmembrane region" description="Helical" evidence="1">
    <location>
        <begin position="60"/>
        <end position="80"/>
    </location>
</feature>
<feature type="transmembrane region" description="Helical" evidence="1">
    <location>
        <begin position="106"/>
        <end position="126"/>
    </location>
</feature>
<feature type="transmembrane region" description="Helical" evidence="1">
    <location>
        <begin position="147"/>
        <end position="167"/>
    </location>
</feature>
<feature type="transmembrane region" description="Helical" evidence="1">
    <location>
        <begin position="186"/>
        <end position="206"/>
    </location>
</feature>
<feature type="transmembrane region" description="Helical" evidence="1">
    <location>
        <begin position="235"/>
        <end position="255"/>
    </location>
</feature>
<feature type="transmembrane region" description="Helical" evidence="1">
    <location>
        <begin position="267"/>
        <end position="287"/>
    </location>
</feature>
<gene>
    <name type="primary">srg-8</name>
    <name type="ORF">T12A2.9</name>
</gene>
<protein>
    <recommendedName>
        <fullName>Serpentine receptor class gamma-8</fullName>
        <shortName>Protein srg-8</shortName>
    </recommendedName>
</protein>